<gene>
    <name type="ordered locus">Nmul_A0712</name>
</gene>
<accession>Q2YB52</accession>
<proteinExistence type="inferred from homology"/>
<sequence length="113" mass="12952">MDTTIDDLATKQCKPCEGAMPPLSQEEITQLMRQLDGWNYLGKTIRKEFSFKNYYQTMAFVNAVAWISHREDHHPDITVGYNKCQVEYTTHAIGGLSENDFICAAKIDTLFQI</sequence>
<keyword id="KW-0456">Lyase</keyword>
<keyword id="KW-1185">Reference proteome</keyword>
<comment type="catalytic activity">
    <reaction evidence="1">
        <text>(4aS,6R)-4a-hydroxy-L-erythro-5,6,7,8-tetrahydrobiopterin = (6R)-L-erythro-6,7-dihydrobiopterin + H2O</text>
        <dbReference type="Rhea" id="RHEA:11920"/>
        <dbReference type="ChEBI" id="CHEBI:15377"/>
        <dbReference type="ChEBI" id="CHEBI:15642"/>
        <dbReference type="ChEBI" id="CHEBI:43120"/>
        <dbReference type="EC" id="4.2.1.96"/>
    </reaction>
</comment>
<comment type="similarity">
    <text evidence="1">Belongs to the pterin-4-alpha-carbinolamine dehydratase family.</text>
</comment>
<organism>
    <name type="scientific">Nitrosospira multiformis (strain ATCC 25196 / NCIMB 11849 / C 71)</name>
    <dbReference type="NCBI Taxonomy" id="323848"/>
    <lineage>
        <taxon>Bacteria</taxon>
        <taxon>Pseudomonadati</taxon>
        <taxon>Pseudomonadota</taxon>
        <taxon>Betaproteobacteria</taxon>
        <taxon>Nitrosomonadales</taxon>
        <taxon>Nitrosomonadaceae</taxon>
        <taxon>Nitrosospira</taxon>
    </lineage>
</organism>
<evidence type="ECO:0000255" key="1">
    <source>
        <dbReference type="HAMAP-Rule" id="MF_00434"/>
    </source>
</evidence>
<name>PHS_NITMU</name>
<feature type="chain" id="PRO_0000231456" description="Putative pterin-4-alpha-carbinolamine dehydratase">
    <location>
        <begin position="1"/>
        <end position="113"/>
    </location>
</feature>
<reference key="1">
    <citation type="submission" date="2005-08" db="EMBL/GenBank/DDBJ databases">
        <title>Complete sequence of chromosome 1 of Nitrosospira multiformis ATCC 25196.</title>
        <authorList>
            <person name="Copeland A."/>
            <person name="Lucas S."/>
            <person name="Lapidus A."/>
            <person name="Barry K."/>
            <person name="Detter J.C."/>
            <person name="Glavina T."/>
            <person name="Hammon N."/>
            <person name="Israni S."/>
            <person name="Pitluck S."/>
            <person name="Chain P."/>
            <person name="Malfatti S."/>
            <person name="Shin M."/>
            <person name="Vergez L."/>
            <person name="Schmutz J."/>
            <person name="Larimer F."/>
            <person name="Land M."/>
            <person name="Hauser L."/>
            <person name="Kyrpides N."/>
            <person name="Lykidis A."/>
            <person name="Richardson P."/>
        </authorList>
    </citation>
    <scope>NUCLEOTIDE SEQUENCE [LARGE SCALE GENOMIC DNA]</scope>
    <source>
        <strain>ATCC 25196 / NCIMB 11849 / C 71</strain>
    </source>
</reference>
<dbReference type="EC" id="4.2.1.96" evidence="1"/>
<dbReference type="EMBL" id="CP000103">
    <property type="protein sequence ID" value="ABB74019.1"/>
    <property type="molecule type" value="Genomic_DNA"/>
</dbReference>
<dbReference type="RefSeq" id="WP_011380069.1">
    <property type="nucleotide sequence ID" value="NC_007614.1"/>
</dbReference>
<dbReference type="SMR" id="Q2YB52"/>
<dbReference type="STRING" id="323848.Nmul_A0712"/>
<dbReference type="KEGG" id="nmu:Nmul_A0712"/>
<dbReference type="eggNOG" id="COG2154">
    <property type="taxonomic scope" value="Bacteria"/>
</dbReference>
<dbReference type="HOGENOM" id="CLU_081974_2_1_4"/>
<dbReference type="OrthoDB" id="9794987at2"/>
<dbReference type="Proteomes" id="UP000002718">
    <property type="component" value="Chromosome"/>
</dbReference>
<dbReference type="GO" id="GO:0008124">
    <property type="term" value="F:4-alpha-hydroxytetrahydrobiopterin dehydratase activity"/>
    <property type="evidence" value="ECO:0007669"/>
    <property type="project" value="UniProtKB-UniRule"/>
</dbReference>
<dbReference type="GO" id="GO:0006729">
    <property type="term" value="P:tetrahydrobiopterin biosynthetic process"/>
    <property type="evidence" value="ECO:0007669"/>
    <property type="project" value="InterPro"/>
</dbReference>
<dbReference type="CDD" id="cd00913">
    <property type="entry name" value="PCD_DCoH_subfamily_a"/>
    <property type="match status" value="1"/>
</dbReference>
<dbReference type="Gene3D" id="3.30.1360.20">
    <property type="entry name" value="Transcriptional coactivator/pterin dehydratase"/>
    <property type="match status" value="1"/>
</dbReference>
<dbReference type="HAMAP" id="MF_00434">
    <property type="entry name" value="Pterin_4_alpha"/>
    <property type="match status" value="1"/>
</dbReference>
<dbReference type="InterPro" id="IPR036428">
    <property type="entry name" value="PCD_sf"/>
</dbReference>
<dbReference type="InterPro" id="IPR001533">
    <property type="entry name" value="Pterin_deHydtase"/>
</dbReference>
<dbReference type="NCBIfam" id="NF002017">
    <property type="entry name" value="PRK00823.1-2"/>
    <property type="match status" value="1"/>
</dbReference>
<dbReference type="NCBIfam" id="NF002019">
    <property type="entry name" value="PRK00823.1-4"/>
    <property type="match status" value="1"/>
</dbReference>
<dbReference type="PANTHER" id="PTHR12599">
    <property type="entry name" value="PTERIN-4-ALPHA-CARBINOLAMINE DEHYDRATASE"/>
    <property type="match status" value="1"/>
</dbReference>
<dbReference type="PANTHER" id="PTHR12599:SF0">
    <property type="entry name" value="PTERIN-4-ALPHA-CARBINOLAMINE DEHYDRATASE"/>
    <property type="match status" value="1"/>
</dbReference>
<dbReference type="Pfam" id="PF01329">
    <property type="entry name" value="Pterin_4a"/>
    <property type="match status" value="1"/>
</dbReference>
<dbReference type="SUPFAM" id="SSF55248">
    <property type="entry name" value="PCD-like"/>
    <property type="match status" value="1"/>
</dbReference>
<protein>
    <recommendedName>
        <fullName evidence="1">Putative pterin-4-alpha-carbinolamine dehydratase</fullName>
        <shortName evidence="1">PHS</shortName>
        <ecNumber evidence="1">4.2.1.96</ecNumber>
    </recommendedName>
    <alternativeName>
        <fullName evidence="1">4-alpha-hydroxy-tetrahydropterin dehydratase</fullName>
    </alternativeName>
    <alternativeName>
        <fullName evidence="1">Pterin carbinolamine dehydratase</fullName>
        <shortName evidence="1">PCD</shortName>
    </alternativeName>
</protein>